<protein>
    <recommendedName>
        <fullName>Mitochondrial import inner membrane translocase subunit Tim8 A</fullName>
    </recommendedName>
</protein>
<evidence type="ECO:0000250" key="1"/>
<evidence type="ECO:0000250" key="2">
    <source>
        <dbReference type="UniProtKB" id="O60220"/>
    </source>
</evidence>
<evidence type="ECO:0000250" key="3">
    <source>
        <dbReference type="UniProtKB" id="Q9WVA2"/>
    </source>
</evidence>
<evidence type="ECO:0000305" key="4"/>
<feature type="chain" id="PRO_0000228020" description="Mitochondrial import inner membrane translocase subunit Tim8 A">
    <location>
        <begin position="1"/>
        <end position="97"/>
    </location>
</feature>
<feature type="short sequence motif" description="Twin CX3C motif">
    <location>
        <begin position="43"/>
        <end position="66"/>
    </location>
</feature>
<feature type="modified residue" description="Phosphoserine" evidence="3">
    <location>
        <position position="57"/>
    </location>
</feature>
<feature type="modified residue" description="Phosphoserine" evidence="3">
    <location>
        <position position="87"/>
    </location>
</feature>
<feature type="modified residue" description="Phosphoserine" evidence="2">
    <location>
        <position position="94"/>
    </location>
</feature>
<feature type="modified residue" description="Phosphoserine" evidence="2">
    <location>
        <position position="96"/>
    </location>
</feature>
<feature type="disulfide bond" evidence="1">
    <location>
        <begin position="43"/>
        <end position="66"/>
    </location>
</feature>
<feature type="disulfide bond" evidence="1">
    <location>
        <begin position="47"/>
        <end position="62"/>
    </location>
</feature>
<sequence>MDSSSSSSAAGLGSVDPQLQHFIEVETQKQRFQQLVHQMTELCWEKCMDKPGPKLDSRAEACFVNCVERFIDTSQFILNRLEQTQKSKPVFSESLSD</sequence>
<reference key="1">
    <citation type="submission" date="2005-08" db="EMBL/GenBank/DDBJ databases">
        <authorList>
            <consortium name="NIH - Mammalian Gene Collection (MGC) project"/>
        </authorList>
    </citation>
    <scope>NUCLEOTIDE SEQUENCE [LARGE SCALE MRNA]</scope>
    <source>
        <strain>Hereford</strain>
        <tissue>Reticulocyte</tissue>
    </source>
</reference>
<dbReference type="EMBL" id="BC103131">
    <property type="protein sequence ID" value="AAI03132.1"/>
    <property type="molecule type" value="mRNA"/>
</dbReference>
<dbReference type="RefSeq" id="NP_001029652.1">
    <property type="nucleotide sequence ID" value="NM_001034480.2"/>
</dbReference>
<dbReference type="SMR" id="Q3ZBS8"/>
<dbReference type="FunCoup" id="Q3ZBS8">
    <property type="interactions" value="1483"/>
</dbReference>
<dbReference type="STRING" id="9913.ENSBTAP00000030114"/>
<dbReference type="PaxDb" id="9913-ENSBTAP00000030114"/>
<dbReference type="Ensembl" id="ENSBTAT00000030129.3">
    <property type="protein sequence ID" value="ENSBTAP00000030114.1"/>
    <property type="gene ID" value="ENSBTAG00000022292.3"/>
</dbReference>
<dbReference type="GeneID" id="515109"/>
<dbReference type="KEGG" id="bta:515109"/>
<dbReference type="CTD" id="1678"/>
<dbReference type="VEuPathDB" id="HostDB:ENSBTAG00000022292"/>
<dbReference type="VGNC" id="VGNC:49578">
    <property type="gene designation" value="TIMM8A"/>
</dbReference>
<dbReference type="eggNOG" id="KOG3489">
    <property type="taxonomic scope" value="Eukaryota"/>
</dbReference>
<dbReference type="GeneTree" id="ENSGT00940000154661"/>
<dbReference type="HOGENOM" id="CLU_141397_1_2_1"/>
<dbReference type="InParanoid" id="Q3ZBS8"/>
<dbReference type="OMA" id="DLCYTGT"/>
<dbReference type="OrthoDB" id="344165at2759"/>
<dbReference type="TreeFam" id="TF106191"/>
<dbReference type="Proteomes" id="UP000009136">
    <property type="component" value="Chromosome X"/>
</dbReference>
<dbReference type="Bgee" id="ENSBTAG00000022292">
    <property type="expression patterns" value="Expressed in oocyte and 106 other cell types or tissues"/>
</dbReference>
<dbReference type="GO" id="GO:0005743">
    <property type="term" value="C:mitochondrial inner membrane"/>
    <property type="evidence" value="ECO:0007669"/>
    <property type="project" value="UniProtKB-SubCell"/>
</dbReference>
<dbReference type="GO" id="GO:0042719">
    <property type="term" value="C:mitochondrial intermembrane space protein transporter complex"/>
    <property type="evidence" value="ECO:0007669"/>
    <property type="project" value="Ensembl"/>
</dbReference>
<dbReference type="GO" id="GO:0042802">
    <property type="term" value="F:identical protein binding"/>
    <property type="evidence" value="ECO:0007669"/>
    <property type="project" value="Ensembl"/>
</dbReference>
<dbReference type="GO" id="GO:0046872">
    <property type="term" value="F:metal ion binding"/>
    <property type="evidence" value="ECO:0007669"/>
    <property type="project" value="UniProtKB-KW"/>
</dbReference>
<dbReference type="GO" id="GO:0045039">
    <property type="term" value="P:protein insertion into mitochondrial inner membrane"/>
    <property type="evidence" value="ECO:0007669"/>
    <property type="project" value="Ensembl"/>
</dbReference>
<dbReference type="FunFam" id="1.10.287.810:FF:000003">
    <property type="entry name" value="Mitochondrial import inner membrane translocase subunit TIM8"/>
    <property type="match status" value="1"/>
</dbReference>
<dbReference type="Gene3D" id="1.10.287.810">
    <property type="entry name" value="Mitochondrial import inner membrane translocase subunit tim13 like domains"/>
    <property type="match status" value="1"/>
</dbReference>
<dbReference type="InterPro" id="IPR004217">
    <property type="entry name" value="Tim10-like"/>
</dbReference>
<dbReference type="InterPro" id="IPR035427">
    <property type="entry name" value="Tim10-like_dom_sf"/>
</dbReference>
<dbReference type="Pfam" id="PF02953">
    <property type="entry name" value="zf-Tim10_DDP"/>
    <property type="match status" value="1"/>
</dbReference>
<dbReference type="SUPFAM" id="SSF144122">
    <property type="entry name" value="Tim10-like"/>
    <property type="match status" value="1"/>
</dbReference>
<keyword id="KW-0143">Chaperone</keyword>
<keyword id="KW-1015">Disulfide bond</keyword>
<keyword id="KW-0472">Membrane</keyword>
<keyword id="KW-0479">Metal-binding</keyword>
<keyword id="KW-0496">Mitochondrion</keyword>
<keyword id="KW-0999">Mitochondrion inner membrane</keyword>
<keyword id="KW-0597">Phosphoprotein</keyword>
<keyword id="KW-0653">Protein transport</keyword>
<keyword id="KW-1185">Reference proteome</keyword>
<keyword id="KW-0811">Translocation</keyword>
<keyword id="KW-0813">Transport</keyword>
<keyword id="KW-0862">Zinc</keyword>
<accession>Q3ZBS8</accession>
<name>TIM8A_BOVIN</name>
<organism>
    <name type="scientific">Bos taurus</name>
    <name type="common">Bovine</name>
    <dbReference type="NCBI Taxonomy" id="9913"/>
    <lineage>
        <taxon>Eukaryota</taxon>
        <taxon>Metazoa</taxon>
        <taxon>Chordata</taxon>
        <taxon>Craniata</taxon>
        <taxon>Vertebrata</taxon>
        <taxon>Euteleostomi</taxon>
        <taxon>Mammalia</taxon>
        <taxon>Eutheria</taxon>
        <taxon>Laurasiatheria</taxon>
        <taxon>Artiodactyla</taxon>
        <taxon>Ruminantia</taxon>
        <taxon>Pecora</taxon>
        <taxon>Bovidae</taxon>
        <taxon>Bovinae</taxon>
        <taxon>Bos</taxon>
    </lineage>
</organism>
<comment type="function">
    <text evidence="1">Mitochondrial intermembrane chaperone that participates in the import and insertion of some multi-pass transmembrane proteins into the mitochondrial inner membrane. Also required for the transfer of beta-barrel precursors from the TOM complex to the sorting and assembly machinery (SAM complex) of the outer membrane. Acts as a chaperone-like protein that protects the hydrophobic precursors from aggregation and guide them through the mitochondrial intermembrane space. The TIMM8-TIMM13 complex mediates the import of proteins such as TIMM23, SLC25A12/ARALAR1 and SLC25A13/ARALAR2, while the predominant TIMM9-TIMM10 70 kDa complex mediates the import of much more proteins (By similarity).</text>
</comment>
<comment type="subunit">
    <text evidence="1">Heterohexamer; composed of 3 copies of TIMM8A and 3 copies of TIMM13, named soluble 70 kDa complex. Associates with the TIM22 complex, whose core is composed of TIMM22 (By similarity).</text>
</comment>
<comment type="subcellular location">
    <subcellularLocation>
        <location evidence="1">Mitochondrion inner membrane</location>
        <topology evidence="1">Peripheral membrane protein</topology>
        <orientation evidence="1">Intermembrane side</orientation>
    </subcellularLocation>
</comment>
<comment type="domain">
    <text evidence="1">The twin CX3C motif contains 4 conserved Cys residues that form 2 disulfide bonds in the mitochondrial intermembrane space. However, during the transit of TIMM8A from cytoplasm into mitochondrion, the Cys residues probably coordinate zinc, thereby preventing folding and allowing its transfer across mitochondrial outer membrane (By similarity).</text>
</comment>
<comment type="similarity">
    <text evidence="4">Belongs to the small Tim family.</text>
</comment>
<proteinExistence type="inferred from homology"/>
<gene>
    <name type="primary">TIMM8A</name>
    <name type="synonym">TIM8A</name>
</gene>